<feature type="initiator methionine" description="Removed" evidence="3">
    <location>
        <position position="1"/>
    </location>
</feature>
<feature type="chain" id="PRO_0000418824" description="Sulfoacetaldehyde dehydrogenase (acylating)">
    <location>
        <begin position="2"/>
        <end position="493"/>
    </location>
</feature>
<feature type="region of interest" description="Disordered" evidence="2">
    <location>
        <begin position="1"/>
        <end position="21"/>
    </location>
</feature>
<feature type="compositionally biased region" description="Basic residues" evidence="2">
    <location>
        <begin position="1"/>
        <end position="10"/>
    </location>
</feature>
<feature type="active site" description="Nucleophile" evidence="1">
    <location>
        <position position="273"/>
    </location>
</feature>
<dbReference type="EC" id="1.2.1.81" evidence="3"/>
<dbReference type="EMBL" id="AM260479">
    <property type="protein sequence ID" value="CAJ93826.1"/>
    <property type="molecule type" value="Genomic_DNA"/>
</dbReference>
<dbReference type="RefSeq" id="WP_011615809.1">
    <property type="nucleotide sequence ID" value="NC_008313.1"/>
</dbReference>
<dbReference type="SMR" id="Q0K845"/>
<dbReference type="STRING" id="381666.H16_A2747"/>
<dbReference type="KEGG" id="reh:H16_A2747"/>
<dbReference type="PATRIC" id="fig|381666.6.peg.3143"/>
<dbReference type="eggNOG" id="COG1012">
    <property type="taxonomic scope" value="Bacteria"/>
</dbReference>
<dbReference type="HOGENOM" id="CLU_028794_3_0_4"/>
<dbReference type="OrthoDB" id="9815791at2"/>
<dbReference type="BioCyc" id="MetaCyc:MONOMER-15852"/>
<dbReference type="BRENDA" id="1.2.1.81">
    <property type="organism ID" value="231"/>
</dbReference>
<dbReference type="Proteomes" id="UP000008210">
    <property type="component" value="Chromosome 1"/>
</dbReference>
<dbReference type="GO" id="GO:0005737">
    <property type="term" value="C:cytoplasm"/>
    <property type="evidence" value="ECO:0007669"/>
    <property type="project" value="UniProtKB-SubCell"/>
</dbReference>
<dbReference type="GO" id="GO:0016620">
    <property type="term" value="F:oxidoreductase activity, acting on the aldehyde or oxo group of donors, NAD or NADP as acceptor"/>
    <property type="evidence" value="ECO:0007669"/>
    <property type="project" value="InterPro"/>
</dbReference>
<dbReference type="CDD" id="cd07122">
    <property type="entry name" value="ALDH_F20_ACDH"/>
    <property type="match status" value="1"/>
</dbReference>
<dbReference type="Gene3D" id="3.40.605.10">
    <property type="entry name" value="Aldehyde Dehydrogenase, Chain A, domain 1"/>
    <property type="match status" value="1"/>
</dbReference>
<dbReference type="Gene3D" id="3.40.309.10">
    <property type="entry name" value="Aldehyde Dehydrogenase, Chain A, domain 2"/>
    <property type="match status" value="1"/>
</dbReference>
<dbReference type="InterPro" id="IPR016161">
    <property type="entry name" value="Ald_DH/histidinol_DH"/>
</dbReference>
<dbReference type="InterPro" id="IPR016163">
    <property type="entry name" value="Ald_DH_C"/>
</dbReference>
<dbReference type="InterPro" id="IPR016162">
    <property type="entry name" value="Ald_DH_N"/>
</dbReference>
<dbReference type="InterPro" id="IPR015590">
    <property type="entry name" value="Aldehyde_DH_dom"/>
</dbReference>
<dbReference type="NCBIfam" id="NF047625">
    <property type="entry name" value="AcylSulfactDhSauS"/>
    <property type="match status" value="1"/>
</dbReference>
<dbReference type="PANTHER" id="PTHR11699">
    <property type="entry name" value="ALDEHYDE DEHYDROGENASE-RELATED"/>
    <property type="match status" value="1"/>
</dbReference>
<dbReference type="Pfam" id="PF00171">
    <property type="entry name" value="Aldedh"/>
    <property type="match status" value="1"/>
</dbReference>
<dbReference type="SUPFAM" id="SSF53720">
    <property type="entry name" value="ALDH-like"/>
    <property type="match status" value="1"/>
</dbReference>
<comment type="function">
    <text evidence="3">Involved in the degradation of sulfoacetate, a widespread natural product (PubMed:20693281). Catalyzes the conversion of sulfoacetyl-CoA and NADPH to sulfoacetaldehyde, CoA and NADP(+) (PubMed:20693281). Specific for NADP(+) and sulfoacetaldehyde (PubMed:20693281).</text>
</comment>
<comment type="catalytic activity">
    <reaction evidence="3">
        <text>sulfoacetaldehyde + NADP(+) + CoA = sulfoacetyl-CoA + NADPH + H(+)</text>
        <dbReference type="Rhea" id="RHEA:29595"/>
        <dbReference type="ChEBI" id="CHEBI:15378"/>
        <dbReference type="ChEBI" id="CHEBI:57287"/>
        <dbReference type="ChEBI" id="CHEBI:57783"/>
        <dbReference type="ChEBI" id="CHEBI:58246"/>
        <dbReference type="ChEBI" id="CHEBI:58349"/>
        <dbReference type="ChEBI" id="CHEBI:61994"/>
        <dbReference type="EC" id="1.2.1.81"/>
    </reaction>
    <physiologicalReaction direction="right-to-left" evidence="3">
        <dbReference type="Rhea" id="RHEA:29597"/>
    </physiologicalReaction>
</comment>
<comment type="biophysicochemical properties">
    <kinetics>
        <KM evidence="3">64 uM for NADP(+)</KM>
        <KM evidence="3">102 uM for CoA</KM>
        <KM evidence="3">330 uM for sulfoacetaldehyde</KM>
    </kinetics>
    <phDependence>
        <text evidence="3">Optimum pH is 9.0.</text>
    </phDependence>
</comment>
<comment type="subunit">
    <text evidence="3">Homodimer.</text>
</comment>
<comment type="subcellular location">
    <subcellularLocation>
        <location evidence="3">Cytoplasm</location>
    </subcellularLocation>
</comment>
<comment type="induction">
    <text evidence="3">Induced by sulfoacetate.</text>
</comment>
<comment type="disruption phenotype">
    <text evidence="3">Mutants do not grow with sulfoacetate, but can use acetate, taurine, isethionate and sulfoacetaldehyde.</text>
</comment>
<comment type="similarity">
    <text evidence="5">Belongs to the aldehyde dehydrogenase family.</text>
</comment>
<organism>
    <name type="scientific">Cupriavidus necator (strain ATCC 17699 / DSM 428 / KCTC 22496 / NCIMB 10442 / H16 / Stanier 337)</name>
    <name type="common">Ralstonia eutropha</name>
    <dbReference type="NCBI Taxonomy" id="381666"/>
    <lineage>
        <taxon>Bacteria</taxon>
        <taxon>Pseudomonadati</taxon>
        <taxon>Pseudomonadota</taxon>
        <taxon>Betaproteobacteria</taxon>
        <taxon>Burkholderiales</taxon>
        <taxon>Burkholderiaceae</taxon>
        <taxon>Cupriavidus</taxon>
    </lineage>
</organism>
<reference key="1">
    <citation type="journal article" date="2006" name="Nat. Biotechnol.">
        <title>Genome sequence of the bioplastic-producing 'Knallgas' bacterium Ralstonia eutropha H16.</title>
        <authorList>
            <person name="Pohlmann A."/>
            <person name="Fricke W.F."/>
            <person name="Reinecke F."/>
            <person name="Kusian B."/>
            <person name="Liesegang H."/>
            <person name="Cramm R."/>
            <person name="Eitinger T."/>
            <person name="Ewering C."/>
            <person name="Poetter M."/>
            <person name="Schwartz E."/>
            <person name="Strittmatter A."/>
            <person name="Voss I."/>
            <person name="Gottschalk G."/>
            <person name="Steinbuechel A."/>
            <person name="Friedrich B."/>
            <person name="Bowien B."/>
        </authorList>
    </citation>
    <scope>NUCLEOTIDE SEQUENCE [LARGE SCALE GENOMIC DNA]</scope>
    <source>
        <strain>ATCC 17699 / DSM 428 / KCTC 22496 / NCIMB 10442 / H16 / Stanier 337</strain>
    </source>
</reference>
<reference key="2">
    <citation type="journal article" date="2010" name="J. Biol. Chem.">
        <title>Sulfoacetate is degraded via a novel pathway involving sulfoacetyl-CoA and sulfoacetaldehyde in Cupriavidus necator H16.</title>
        <authorList>
            <person name="Weinitschke S."/>
            <person name="Hollemeyer K."/>
            <person name="Kusian B."/>
            <person name="Bowien B."/>
            <person name="Smits T.H."/>
            <person name="Cook A.M."/>
        </authorList>
    </citation>
    <scope>PROTEIN SEQUENCE OF 2-7</scope>
    <scope>FUNCTION</scope>
    <scope>CATALYTIC ACTIVITY</scope>
    <scope>BIOPHYSICOCHEMICAL PROPERTIES</scope>
    <scope>SUBUNIT</scope>
    <scope>SUBCELLULAR LOCATION</scope>
    <scope>INDUCTION</scope>
    <scope>DISRUPTION PHENOTYPE</scope>
    <scope>GENE NAME</scope>
    <source>
        <strain>ATCC 17699 / DSM 428 / KCTC 22496 / NCIMB 10442 / H16 / Stanier 337</strain>
    </source>
</reference>
<gene>
    <name evidence="4" type="primary">sauS</name>
    <name type="ordered locus">H16_A2747</name>
</gene>
<keyword id="KW-0963">Cytoplasm</keyword>
<keyword id="KW-0903">Direct protein sequencing</keyword>
<keyword id="KW-0521">NADP</keyword>
<keyword id="KW-0560">Oxidoreductase</keyword>
<keyword id="KW-1185">Reference proteome</keyword>
<evidence type="ECO:0000250" key="1"/>
<evidence type="ECO:0000256" key="2">
    <source>
        <dbReference type="SAM" id="MobiDB-lite"/>
    </source>
</evidence>
<evidence type="ECO:0000269" key="3">
    <source>
    </source>
</evidence>
<evidence type="ECO:0000303" key="4">
    <source>
    </source>
</evidence>
<evidence type="ECO:0000305" key="5"/>
<name>SAUS_CUPNH</name>
<sequence>MSVQILHRRQSNNSDLPLPTASLPVQPAQAAAEAVAAVVARARQAQREFARADQATVDTAVAAAAWAIMEPARNRQLAERAVADTGLGNVDDKIRKNHRKTLGLLRDLHGRRTVGVIAQDAAAGITEIARPVGVVAAITPSTNPAATPANKIINALKCGNSVILAPSPKGQDTCALLLSFIHAEFARAGLPADLVQMLPAPVSKTATAELMRQADLVVATGSQANVRMAYTCGTPAFGVGAGNVASIIDASATLDDAAAKVARSKTFDNATSCSSENSLVVVDAVYTPMLDALAAVGGVLLTASEKARLQALMWRDAKLAGSFTGQSATRIAELAGLERVRALQPAMLLVEETGVGSDYPFSGEKLSPVLTLYRATDFAAAVERVASLYAYMGAGHSVSLHSSNPRHALQLGQELPVARVIVNQAHCFATGGNFDNGLPFSLSMGCGTWGGNNFSDNLGWRQYLNITRIAVPIAEHVPDEADLLGDYFARVGK</sequence>
<accession>Q0K845</accession>
<protein>
    <recommendedName>
        <fullName>Sulfoacetaldehyde dehydrogenase (acylating)</fullName>
        <ecNumber evidence="3">1.2.1.81</ecNumber>
    </recommendedName>
</protein>
<proteinExistence type="evidence at protein level"/>